<dbReference type="EMBL" id="X59697">
    <property type="protein sequence ID" value="CAA42218.1"/>
    <property type="molecule type" value="mRNA"/>
</dbReference>
<dbReference type="EMBL" id="BC105365">
    <property type="protein sequence ID" value="AAI05366.1"/>
    <property type="molecule type" value="mRNA"/>
</dbReference>
<dbReference type="PIR" id="S16208">
    <property type="entry name" value="S16208"/>
</dbReference>
<dbReference type="RefSeq" id="NP_787020.1">
    <property type="nucleotide sequence ID" value="NM_175826.4"/>
</dbReference>
<dbReference type="PDB" id="5LC5">
    <property type="method" value="EM"/>
    <property type="resolution" value="4.35 A"/>
    <property type="chains" value="X=1-114"/>
</dbReference>
<dbReference type="PDB" id="5LDW">
    <property type="method" value="EM"/>
    <property type="resolution" value="4.27 A"/>
    <property type="chains" value="X=1-114"/>
</dbReference>
<dbReference type="PDB" id="5LDX">
    <property type="method" value="EM"/>
    <property type="resolution" value="5.60 A"/>
    <property type="chains" value="X=6-114"/>
</dbReference>
<dbReference type="PDB" id="5O31">
    <property type="method" value="EM"/>
    <property type="resolution" value="4.13 A"/>
    <property type="chains" value="X=2-172"/>
</dbReference>
<dbReference type="PDB" id="7DGQ">
    <property type="method" value="EM"/>
    <property type="resolution" value="5.00 A"/>
    <property type="chains" value="Q=2-172"/>
</dbReference>
<dbReference type="PDB" id="7DGR">
    <property type="method" value="EM"/>
    <property type="resolution" value="4.60 A"/>
    <property type="chains" value="Q=2-172"/>
</dbReference>
<dbReference type="PDB" id="7DGS">
    <property type="method" value="EM"/>
    <property type="resolution" value="7.80 A"/>
    <property type="chains" value="Q=2-172"/>
</dbReference>
<dbReference type="PDB" id="7DGZ">
    <property type="method" value="EM"/>
    <property type="resolution" value="3.80 A"/>
    <property type="chains" value="Q=2-172"/>
</dbReference>
<dbReference type="PDB" id="7DH0">
    <property type="method" value="EM"/>
    <property type="resolution" value="4.20 A"/>
    <property type="chains" value="Q=2-172"/>
</dbReference>
<dbReference type="PDB" id="7DKF">
    <property type="method" value="EM"/>
    <property type="resolution" value="8.30 A"/>
    <property type="chains" value="Q2=2-172"/>
</dbReference>
<dbReference type="PDB" id="7QSD">
    <property type="method" value="EM"/>
    <property type="resolution" value="3.10 A"/>
    <property type="chains" value="X=1-172"/>
</dbReference>
<dbReference type="PDB" id="7QSK">
    <property type="method" value="EM"/>
    <property type="resolution" value="2.84 A"/>
    <property type="chains" value="X=1-172"/>
</dbReference>
<dbReference type="PDB" id="7QSL">
    <property type="method" value="EM"/>
    <property type="resolution" value="2.76 A"/>
    <property type="chains" value="X=1-172"/>
</dbReference>
<dbReference type="PDB" id="7QSM">
    <property type="method" value="EM"/>
    <property type="resolution" value="2.30 A"/>
    <property type="chains" value="X=1-172"/>
</dbReference>
<dbReference type="PDB" id="7QSN">
    <property type="method" value="EM"/>
    <property type="resolution" value="2.81 A"/>
    <property type="chains" value="X=1-172"/>
</dbReference>
<dbReference type="PDB" id="7QSO">
    <property type="method" value="EM"/>
    <property type="resolution" value="3.02 A"/>
    <property type="chains" value="X=1-172"/>
</dbReference>
<dbReference type="PDB" id="7R41">
    <property type="method" value="EM"/>
    <property type="resolution" value="2.30 A"/>
    <property type="chains" value="X=1-172"/>
</dbReference>
<dbReference type="PDB" id="7R42">
    <property type="method" value="EM"/>
    <property type="resolution" value="2.30 A"/>
    <property type="chains" value="X=1-172"/>
</dbReference>
<dbReference type="PDB" id="7R43">
    <property type="method" value="EM"/>
    <property type="resolution" value="2.40 A"/>
    <property type="chains" value="X=1-172"/>
</dbReference>
<dbReference type="PDB" id="7R44">
    <property type="method" value="EM"/>
    <property type="resolution" value="2.40 A"/>
    <property type="chains" value="X=1-172"/>
</dbReference>
<dbReference type="PDB" id="7R45">
    <property type="method" value="EM"/>
    <property type="resolution" value="2.40 A"/>
    <property type="chains" value="X=1-172"/>
</dbReference>
<dbReference type="PDB" id="7R46">
    <property type="method" value="EM"/>
    <property type="resolution" value="2.40 A"/>
    <property type="chains" value="X=1-172"/>
</dbReference>
<dbReference type="PDB" id="7R47">
    <property type="method" value="EM"/>
    <property type="resolution" value="2.30 A"/>
    <property type="chains" value="X=1-172"/>
</dbReference>
<dbReference type="PDB" id="7R48">
    <property type="method" value="EM"/>
    <property type="resolution" value="2.30 A"/>
    <property type="chains" value="X=1-172"/>
</dbReference>
<dbReference type="PDB" id="7R4C">
    <property type="method" value="EM"/>
    <property type="resolution" value="2.30 A"/>
    <property type="chains" value="X=1-172"/>
</dbReference>
<dbReference type="PDB" id="7R4D">
    <property type="method" value="EM"/>
    <property type="resolution" value="2.30 A"/>
    <property type="chains" value="X=1-172"/>
</dbReference>
<dbReference type="PDB" id="7R4F">
    <property type="method" value="EM"/>
    <property type="resolution" value="2.40 A"/>
    <property type="chains" value="X=1-172"/>
</dbReference>
<dbReference type="PDB" id="7R4G">
    <property type="method" value="EM"/>
    <property type="resolution" value="2.50 A"/>
    <property type="chains" value="X=1-172"/>
</dbReference>
<dbReference type="PDB" id="8Q0A">
    <property type="method" value="EM"/>
    <property type="resolution" value="3.10 A"/>
    <property type="chains" value="X=1-172"/>
</dbReference>
<dbReference type="PDB" id="8Q0F">
    <property type="method" value="EM"/>
    <property type="resolution" value="3.10 A"/>
    <property type="chains" value="X=1-172"/>
</dbReference>
<dbReference type="PDB" id="8Q0J">
    <property type="method" value="EM"/>
    <property type="resolution" value="3.80 A"/>
    <property type="chains" value="X=1-172"/>
</dbReference>
<dbReference type="PDB" id="8Q0M">
    <property type="method" value="EM"/>
    <property type="resolution" value="3.10 A"/>
    <property type="chains" value="X=1-172"/>
</dbReference>
<dbReference type="PDB" id="8Q0O">
    <property type="method" value="EM"/>
    <property type="resolution" value="3.10 A"/>
    <property type="chains" value="X=1-172"/>
</dbReference>
<dbReference type="PDB" id="8Q0Q">
    <property type="method" value="EM"/>
    <property type="resolution" value="3.60 A"/>
    <property type="chains" value="X=1-172"/>
</dbReference>
<dbReference type="PDB" id="8Q1P">
    <property type="method" value="EM"/>
    <property type="resolution" value="2.90 A"/>
    <property type="chains" value="X=1-172"/>
</dbReference>
<dbReference type="PDB" id="8Q1U">
    <property type="method" value="EM"/>
    <property type="resolution" value="3.30 A"/>
    <property type="chains" value="X=1-172"/>
</dbReference>
<dbReference type="PDB" id="8Q1Y">
    <property type="method" value="EM"/>
    <property type="resolution" value="2.60 A"/>
    <property type="chains" value="X=1-172"/>
</dbReference>
<dbReference type="PDB" id="8Q25">
    <property type="method" value="EM"/>
    <property type="resolution" value="2.80 A"/>
    <property type="chains" value="X=1-172"/>
</dbReference>
<dbReference type="PDB" id="8Q45">
    <property type="method" value="EM"/>
    <property type="resolution" value="2.70 A"/>
    <property type="chains" value="X=1-172"/>
</dbReference>
<dbReference type="PDB" id="8Q46">
    <property type="method" value="EM"/>
    <property type="resolution" value="2.60 A"/>
    <property type="chains" value="X=1-172"/>
</dbReference>
<dbReference type="PDB" id="8Q47">
    <property type="method" value="EM"/>
    <property type="resolution" value="2.90 A"/>
    <property type="chains" value="X=1-172"/>
</dbReference>
<dbReference type="PDB" id="8Q48">
    <property type="method" value="EM"/>
    <property type="resolution" value="2.50 A"/>
    <property type="chains" value="X=1-172"/>
</dbReference>
<dbReference type="PDB" id="8Q49">
    <property type="method" value="EM"/>
    <property type="resolution" value="2.60 A"/>
    <property type="chains" value="X=1-172"/>
</dbReference>
<dbReference type="PDB" id="8Q4A">
    <property type="method" value="EM"/>
    <property type="resolution" value="2.60 A"/>
    <property type="chains" value="X=1-172"/>
</dbReference>
<dbReference type="PDBsum" id="5LC5"/>
<dbReference type="PDBsum" id="5LDW"/>
<dbReference type="PDBsum" id="5LDX"/>
<dbReference type="PDBsum" id="5O31"/>
<dbReference type="PDBsum" id="7DGQ"/>
<dbReference type="PDBsum" id="7DGR"/>
<dbReference type="PDBsum" id="7DGS"/>
<dbReference type="PDBsum" id="7DGZ"/>
<dbReference type="PDBsum" id="7DH0"/>
<dbReference type="PDBsum" id="7DKF"/>
<dbReference type="PDBsum" id="7QSD"/>
<dbReference type="PDBsum" id="7QSK"/>
<dbReference type="PDBsum" id="7QSL"/>
<dbReference type="PDBsum" id="7QSM"/>
<dbReference type="PDBsum" id="7QSN"/>
<dbReference type="PDBsum" id="7QSO"/>
<dbReference type="PDBsum" id="7R41"/>
<dbReference type="PDBsum" id="7R42"/>
<dbReference type="PDBsum" id="7R43"/>
<dbReference type="PDBsum" id="7R44"/>
<dbReference type="PDBsum" id="7R45"/>
<dbReference type="PDBsum" id="7R46"/>
<dbReference type="PDBsum" id="7R47"/>
<dbReference type="PDBsum" id="7R48"/>
<dbReference type="PDBsum" id="7R4C"/>
<dbReference type="PDBsum" id="7R4D"/>
<dbReference type="PDBsum" id="7R4F"/>
<dbReference type="PDBsum" id="7R4G"/>
<dbReference type="PDBsum" id="8Q0A"/>
<dbReference type="PDBsum" id="8Q0F"/>
<dbReference type="PDBsum" id="8Q0J"/>
<dbReference type="PDBsum" id="8Q0M"/>
<dbReference type="PDBsum" id="8Q0O"/>
<dbReference type="PDBsum" id="8Q0Q"/>
<dbReference type="PDBsum" id="8Q1P"/>
<dbReference type="PDBsum" id="8Q1U"/>
<dbReference type="PDBsum" id="8Q1Y"/>
<dbReference type="PDBsum" id="8Q25"/>
<dbReference type="PDBsum" id="8Q45"/>
<dbReference type="PDBsum" id="8Q46"/>
<dbReference type="PDBsum" id="8Q47"/>
<dbReference type="PDBsum" id="8Q48"/>
<dbReference type="PDBsum" id="8Q49"/>
<dbReference type="PDBsum" id="8Q4A"/>
<dbReference type="EMDB" id="EMD-14127"/>
<dbReference type="EMDB" id="EMD-14132"/>
<dbReference type="EMDB" id="EMD-14133"/>
<dbReference type="EMDB" id="EMD-14134"/>
<dbReference type="EMDB" id="EMD-14139"/>
<dbReference type="EMDB" id="EMD-14140"/>
<dbReference type="EMDB" id="EMD-14251"/>
<dbReference type="EMDB" id="EMD-14256"/>
<dbReference type="EMDB" id="EMD-14261"/>
<dbReference type="EMDB" id="EMD-14266"/>
<dbReference type="EMDB" id="EMD-14272"/>
<dbReference type="EMDB" id="EMD-14277"/>
<dbReference type="EMDB" id="EMD-14282"/>
<dbReference type="EMDB" id="EMD-14287"/>
<dbReference type="EMDB" id="EMD-14292"/>
<dbReference type="EMDB" id="EMD-14297"/>
<dbReference type="EMDB" id="EMD-14302"/>
<dbReference type="EMDB" id="EMD-14307"/>
<dbReference type="EMDB" id="EMD-18051"/>
<dbReference type="EMDB" id="EMD-18052"/>
<dbReference type="EMDB" id="EMD-18054"/>
<dbReference type="EMDB" id="EMD-18055"/>
<dbReference type="EMDB" id="EMD-18057"/>
<dbReference type="EMDB" id="EMD-18059"/>
<dbReference type="EMDB" id="EMD-18066"/>
<dbReference type="EMDB" id="EMD-18067"/>
<dbReference type="EMDB" id="EMD-18068"/>
<dbReference type="EMDB" id="EMD-18069"/>
<dbReference type="EMDB" id="EMD-18138"/>
<dbReference type="EMDB" id="EMD-18139"/>
<dbReference type="EMDB" id="EMD-18140"/>
<dbReference type="EMDB" id="EMD-18141"/>
<dbReference type="EMDB" id="EMD-18142"/>
<dbReference type="EMDB" id="EMD-18143"/>
<dbReference type="EMDB" id="EMD-30673"/>
<dbReference type="EMDB" id="EMD-30674"/>
<dbReference type="EMDB" id="EMD-30675"/>
<dbReference type="EMDB" id="EMD-30676"/>
<dbReference type="EMDB" id="EMD-30677"/>
<dbReference type="EMDB" id="EMD-30706"/>
<dbReference type="EMDB" id="EMD-3731"/>
<dbReference type="EMDB" id="EMD-4032"/>
<dbReference type="EMDB" id="EMD-4040"/>
<dbReference type="EMDB" id="EMD-4041"/>
<dbReference type="SMR" id="P42029"/>
<dbReference type="CORUM" id="P42029"/>
<dbReference type="DIP" id="DIP-38811N"/>
<dbReference type="FunCoup" id="P42029">
    <property type="interactions" value="1950"/>
</dbReference>
<dbReference type="IntAct" id="P42029">
    <property type="interactions" value="1"/>
</dbReference>
<dbReference type="STRING" id="9913.ENSBTAP00000005628"/>
<dbReference type="TCDB" id="3.D.1.6.1">
    <property type="family name" value="the h+ or na+-translocating nadh dehydrogenase (ndh) family"/>
</dbReference>
<dbReference type="PaxDb" id="9913-ENSBTAP00000005628"/>
<dbReference type="PeptideAtlas" id="P42029"/>
<dbReference type="GeneID" id="327710"/>
<dbReference type="KEGG" id="bta:327710"/>
<dbReference type="CTD" id="4702"/>
<dbReference type="VEuPathDB" id="HostDB:ENSBTAG00000004295"/>
<dbReference type="eggNOG" id="KOG3458">
    <property type="taxonomic scope" value="Eukaryota"/>
</dbReference>
<dbReference type="HOGENOM" id="CLU_081931_2_1_1"/>
<dbReference type="InParanoid" id="P42029"/>
<dbReference type="OMA" id="FRTHWQC"/>
<dbReference type="OrthoDB" id="276296at2759"/>
<dbReference type="TreeFam" id="TF105633"/>
<dbReference type="Reactome" id="R-BTA-611105">
    <property type="pathway name" value="Respiratory electron transport"/>
</dbReference>
<dbReference type="Reactome" id="R-BTA-6799198">
    <property type="pathway name" value="Complex I biogenesis"/>
</dbReference>
<dbReference type="Proteomes" id="UP000009136">
    <property type="component" value="Chromosome 11"/>
</dbReference>
<dbReference type="Bgee" id="ENSBTAG00000004295">
    <property type="expression patterns" value="Expressed in cardiac atrium and 107 other cell types or tissues"/>
</dbReference>
<dbReference type="GO" id="GO:0005743">
    <property type="term" value="C:mitochondrial inner membrane"/>
    <property type="evidence" value="ECO:0007669"/>
    <property type="project" value="UniProtKB-SubCell"/>
</dbReference>
<dbReference type="GO" id="GO:0005758">
    <property type="term" value="C:mitochondrial intermembrane space"/>
    <property type="evidence" value="ECO:0007669"/>
    <property type="project" value="UniProtKB-SubCell"/>
</dbReference>
<dbReference type="GO" id="GO:0005739">
    <property type="term" value="C:mitochondrion"/>
    <property type="evidence" value="ECO:0000305"/>
    <property type="project" value="UniProtKB"/>
</dbReference>
<dbReference type="GO" id="GO:0045271">
    <property type="term" value="C:respiratory chain complex I"/>
    <property type="evidence" value="ECO:0000314"/>
    <property type="project" value="UniProtKB"/>
</dbReference>
<dbReference type="GO" id="GO:0006120">
    <property type="term" value="P:mitochondrial electron transport, NADH to ubiquinone"/>
    <property type="evidence" value="ECO:0007669"/>
    <property type="project" value="InterPro"/>
</dbReference>
<dbReference type="InterPro" id="IPR010625">
    <property type="entry name" value="CHCH"/>
</dbReference>
<dbReference type="InterPro" id="IPR016680">
    <property type="entry name" value="NDUFA8"/>
</dbReference>
<dbReference type="PANTHER" id="PTHR13344:SF0">
    <property type="entry name" value="NADH DEHYDROGENASE [UBIQUINONE] 1 ALPHA SUBCOMPLEX SUBUNIT 8"/>
    <property type="match status" value="1"/>
</dbReference>
<dbReference type="PANTHER" id="PTHR13344">
    <property type="entry name" value="NADH-UBIQUINONE OXIDOREDUCTASE"/>
    <property type="match status" value="1"/>
</dbReference>
<dbReference type="Pfam" id="PF06747">
    <property type="entry name" value="CHCH"/>
    <property type="match status" value="1"/>
</dbReference>
<dbReference type="PIRSF" id="PIRSF017016">
    <property type="entry name" value="NDUA8"/>
    <property type="match status" value="1"/>
</dbReference>
<dbReference type="PROSITE" id="PS51808">
    <property type="entry name" value="CHCH"/>
    <property type="match status" value="2"/>
</dbReference>
<feature type="initiator methionine" description="Removed" evidence="4">
    <location>
        <position position="1"/>
    </location>
</feature>
<feature type="chain" id="PRO_0000118733" description="NADH dehydrogenase [ubiquinone] 1 alpha subcomplex subunit 8">
    <location>
        <begin position="2"/>
        <end position="172"/>
    </location>
</feature>
<feature type="domain" description="CHCH 1" evidence="2">
    <location>
        <begin position="33"/>
        <end position="74"/>
    </location>
</feature>
<feature type="domain" description="CHCH 2" evidence="2">
    <location>
        <begin position="75"/>
        <end position="118"/>
    </location>
</feature>
<feature type="region of interest" description="Disordered" evidence="3">
    <location>
        <begin position="133"/>
        <end position="159"/>
    </location>
</feature>
<feature type="short sequence motif" description="Cx9C motif 1" evidence="2">
    <location>
        <begin position="36"/>
        <end position="46"/>
    </location>
</feature>
<feature type="short sequence motif" description="Cx9C motif 2" evidence="2">
    <location>
        <begin position="56"/>
        <end position="66"/>
    </location>
</feature>
<feature type="short sequence motif" description="Cx9C motif 3" evidence="2">
    <location>
        <begin position="78"/>
        <end position="88"/>
    </location>
</feature>
<feature type="short sequence motif" description="Cx9C motif 4" evidence="2">
    <location>
        <begin position="100"/>
        <end position="110"/>
    </location>
</feature>
<feature type="compositionally biased region" description="Basic and acidic residues" evidence="3">
    <location>
        <begin position="146"/>
        <end position="159"/>
    </location>
</feature>
<feature type="disulfide bond" evidence="2">
    <location>
        <begin position="36"/>
        <end position="66"/>
    </location>
</feature>
<feature type="disulfide bond" evidence="2">
    <location>
        <begin position="46"/>
        <end position="56"/>
    </location>
</feature>
<feature type="disulfide bond" evidence="2">
    <location>
        <begin position="78"/>
        <end position="110"/>
    </location>
</feature>
<feature type="disulfide bond" evidence="2">
    <location>
        <begin position="88"/>
        <end position="100"/>
    </location>
</feature>
<feature type="helix" evidence="8">
    <location>
        <begin position="11"/>
        <end position="13"/>
    </location>
</feature>
<feature type="helix" evidence="8">
    <location>
        <begin position="22"/>
        <end position="35"/>
    </location>
</feature>
<feature type="helix" evidence="8">
    <location>
        <begin position="37"/>
        <end position="50"/>
    </location>
</feature>
<feature type="helix" evidence="8">
    <location>
        <begin position="53"/>
        <end position="56"/>
    </location>
</feature>
<feature type="helix" evidence="8">
    <location>
        <begin position="57"/>
        <end position="77"/>
    </location>
</feature>
<feature type="helix" evidence="8">
    <location>
        <begin position="79"/>
        <end position="91"/>
    </location>
</feature>
<feature type="strand" evidence="9">
    <location>
        <begin position="92"/>
        <end position="94"/>
    </location>
</feature>
<feature type="helix" evidence="8">
    <location>
        <begin position="97"/>
        <end position="99"/>
    </location>
</feature>
<feature type="helix" evidence="8">
    <location>
        <begin position="101"/>
        <end position="115"/>
    </location>
</feature>
<feature type="helix" evidence="8">
    <location>
        <begin position="124"/>
        <end position="126"/>
    </location>
</feature>
<feature type="turn" evidence="8">
    <location>
        <begin position="162"/>
        <end position="165"/>
    </location>
</feature>
<gene>
    <name type="primary">NDUFA8</name>
</gene>
<protein>
    <recommendedName>
        <fullName>NADH dehydrogenase [ubiquinone] 1 alpha subcomplex subunit 8</fullName>
    </recommendedName>
    <alternativeName>
        <fullName>Complex I-19kD</fullName>
        <shortName>CI-19kD</shortName>
    </alternativeName>
    <alternativeName>
        <fullName>Complex I-PGIV</fullName>
        <shortName>CI-PGIV</shortName>
    </alternativeName>
    <alternativeName>
        <fullName>NADH-ubiquinone oxidoreductase 19 kDa subunit</fullName>
    </alternativeName>
</protein>
<reference key="1">
    <citation type="journal article" date="1991" name="Biochem. J.">
        <title>NADH:ubiquinone oxidoreductase from bovine mitochondria. cDNA sequence of a 19 kDa cysteine-rich subunit.</title>
        <authorList>
            <person name="Dupuis A."/>
            <person name="Skehel J.M."/>
            <person name="Walker J.E."/>
        </authorList>
    </citation>
    <scope>NUCLEOTIDE SEQUENCE [MRNA]</scope>
    <scope>PROTEIN SEQUENCE OF 2-28</scope>
    <source>
        <tissue>Heart</tissue>
    </source>
</reference>
<reference key="2">
    <citation type="submission" date="2005-09" db="EMBL/GenBank/DDBJ databases">
        <authorList>
            <consortium name="NIH - Mammalian Gene Collection (MGC) project"/>
        </authorList>
    </citation>
    <scope>NUCLEOTIDE SEQUENCE [LARGE SCALE MRNA]</scope>
    <source>
        <strain>Crossbred X Angus</strain>
        <tissue>Ileum</tissue>
    </source>
</reference>
<reference key="3">
    <citation type="journal article" date="2008" name="Anal. Biochem.">
        <title>Subunit analysis of bovine heart complex I by reversed-phase high-performance liquid chromatography, electrospray ionization-tandem mass spectrometry, and matrix-assisted laser desorption/ionization-time-of-flight mass spectrometry.</title>
        <authorList>
            <person name="Lemma-Gray P."/>
            <person name="Valusova E."/>
            <person name="Carroll C.A."/>
            <person name="Weintraub S.T."/>
            <person name="Musatov A."/>
            <person name="Robinson N.C."/>
        </authorList>
    </citation>
    <scope>SUBUNIT</scope>
    <scope>IDENTIFICATION IN COMPLEX I</scope>
    <scope>SUBCELLULAR LOCATION</scope>
</reference>
<organism>
    <name type="scientific">Bos taurus</name>
    <name type="common">Bovine</name>
    <dbReference type="NCBI Taxonomy" id="9913"/>
    <lineage>
        <taxon>Eukaryota</taxon>
        <taxon>Metazoa</taxon>
        <taxon>Chordata</taxon>
        <taxon>Craniata</taxon>
        <taxon>Vertebrata</taxon>
        <taxon>Euteleostomi</taxon>
        <taxon>Mammalia</taxon>
        <taxon>Eutheria</taxon>
        <taxon>Laurasiatheria</taxon>
        <taxon>Artiodactyla</taxon>
        <taxon>Ruminantia</taxon>
        <taxon>Pecora</taxon>
        <taxon>Bovidae</taxon>
        <taxon>Bovinae</taxon>
        <taxon>Bos</taxon>
    </lineage>
</organism>
<keyword id="KW-0002">3D-structure</keyword>
<keyword id="KW-0903">Direct protein sequencing</keyword>
<keyword id="KW-1015">Disulfide bond</keyword>
<keyword id="KW-0249">Electron transport</keyword>
<keyword id="KW-0472">Membrane</keyword>
<keyword id="KW-0496">Mitochondrion</keyword>
<keyword id="KW-0999">Mitochondrion inner membrane</keyword>
<keyword id="KW-1185">Reference proteome</keyword>
<keyword id="KW-0677">Repeat</keyword>
<keyword id="KW-0679">Respiratory chain</keyword>
<keyword id="KW-0813">Transport</keyword>
<comment type="function">
    <text evidence="1">Accessory subunit of the mitochondrial membrane respiratory chain NADH dehydrogenase (Complex I), that is believed not to be involved in catalysis. Complex I functions in the transfer of electrons from NADH to the respiratory chain. The immediate electron acceptor for the enzyme is believed to be ubiquinone.</text>
</comment>
<comment type="subunit">
    <text evidence="5">Complex I is composed of 45 different subunits.</text>
</comment>
<comment type="subcellular location">
    <subcellularLocation>
        <location evidence="7">Mitochondrion inner membrane</location>
        <topology evidence="1">Peripheral membrane protein</topology>
    </subcellularLocation>
    <subcellularLocation>
        <location evidence="1">Mitochondrion intermembrane space</location>
    </subcellularLocation>
    <subcellularLocation>
        <location evidence="1">Mitochondrion</location>
    </subcellularLocation>
</comment>
<comment type="domain">
    <text evidence="1">Contains four C-X9-C motifs that are predicted to form a helix-coil-helix structure, permitting the formation of intramolecular disulfide bonds.</text>
</comment>
<comment type="similarity">
    <text evidence="6">Belongs to the complex I NDUFA8 subunit family.</text>
</comment>
<proteinExistence type="evidence at protein level"/>
<name>NDUA8_BOVIN</name>
<accession>P42029</accession>
<accession>Q2KJF6</accession>
<evidence type="ECO:0000250" key="1">
    <source>
        <dbReference type="UniProtKB" id="P51970"/>
    </source>
</evidence>
<evidence type="ECO:0000255" key="2">
    <source>
        <dbReference type="PROSITE-ProRule" id="PRU01150"/>
    </source>
</evidence>
<evidence type="ECO:0000256" key="3">
    <source>
        <dbReference type="SAM" id="MobiDB-lite"/>
    </source>
</evidence>
<evidence type="ECO:0000269" key="4">
    <source>
    </source>
</evidence>
<evidence type="ECO:0000269" key="5">
    <source>
    </source>
</evidence>
<evidence type="ECO:0000305" key="6"/>
<evidence type="ECO:0000305" key="7">
    <source>
    </source>
</evidence>
<evidence type="ECO:0007829" key="8">
    <source>
        <dbReference type="PDB" id="7QSM"/>
    </source>
</evidence>
<evidence type="ECO:0007829" key="9">
    <source>
        <dbReference type="PDB" id="8Q48"/>
    </source>
</evidence>
<sequence length="172" mass="20091">MPGIVELPSLEDLKVQEVKVSSSVLKAAAHHYGAQCDKPNKEFMLCRWEEKDPRRCLEEGKLVNQCALEFFRQIKRHCAEPFTEYWTCIDYSGLQLFRRCRKQQAQFDECVLDKLGWVRPDLGDLSKVTKVKTDRPLPENPYHSRARPEPNPEVEGDLKPARHGSRLFFWTM</sequence>